<keyword id="KW-0998">Cell outer membrane</keyword>
<keyword id="KW-0472">Membrane</keyword>
<keyword id="KW-0732">Signal</keyword>
<sequence>MPPKPLFPNVFPGDGAPRKRRLALALLAVPGLVPAVSYAQLSGAAAQPQPLDSPWDLRLAPQLEDHPLKDGAKPAAFVIADHTSGTAEQDLAAKGSAELRRGDAVVKADALHYDQDTDMADAYGQVRVINGGTSFAGPEAHLKVEANQGFMTAPKYHFNVTGGSGSAERVDLLDSERSVFVNGTYTACQCATDPAWYIKGSRFDFDTGADEGTARNGVLFFQGVPIFASPWLTFPLSGERRSGLLPPTFSLNSNNGFELTLPYYFNIAPNRDLTITPRIISRRGVQTEASFRYLSPTYSGTLTANYLPDDRLAHRNRYAIYWQHQQNFGGGFGGYVYFNKVSDNTYPEDLGSTNEFINGTQTLYQQEAGLTYNNGPWSVLARYQHWQTLPPSIAPYSREPQLNVKYTKYNVGGFDFGAEADYSRFRITTADATEGDRIVFNPYIAYGVYGPGYFVVPKVQYHFASYDLNYLSSSTPNSPKRFTESIPTVSFDTGLIFDRSVRLFGQDFIQTLEPRLYYVYTPYRDQSNAPLFDTAESDFGLAEIYQPNTFVGNDRIADANRITAGLTSRFIDPRTGDERARFVIAQQYYFANQRVTLNSVQAPVQARHSDLIVGAALKLGSGFMSETAFQYNQNNNQLVKSSIGFGFSPGERRVINVGYRYTRANTTLDNQPINQFLVSAQWPLTRRLYAVGRFNYDLAANRVVDGLLGLQYDADCWALGVGAQRFANGVNSSGQQNSSTRFMMQLTLKGLSSIDNGLVAAFRAGVPGYTALPSAPPPMSRFSNYE</sequence>
<accession>Q0BC04</accession>
<protein>
    <recommendedName>
        <fullName evidence="1">LPS-assembly protein LptD</fullName>
    </recommendedName>
</protein>
<proteinExistence type="inferred from homology"/>
<gene>
    <name evidence="1" type="primary">lptD</name>
    <name type="synonym">imp</name>
    <name type="synonym">ostA</name>
    <name type="ordered locus">Bamb_2763</name>
</gene>
<reference key="1">
    <citation type="submission" date="2006-08" db="EMBL/GenBank/DDBJ databases">
        <title>Complete sequence of chromosome 1 of Burkholderia cepacia AMMD.</title>
        <authorList>
            <person name="Copeland A."/>
            <person name="Lucas S."/>
            <person name="Lapidus A."/>
            <person name="Barry K."/>
            <person name="Detter J.C."/>
            <person name="Glavina del Rio T."/>
            <person name="Hammon N."/>
            <person name="Israni S."/>
            <person name="Pitluck S."/>
            <person name="Bruce D."/>
            <person name="Chain P."/>
            <person name="Malfatti S."/>
            <person name="Shin M."/>
            <person name="Vergez L."/>
            <person name="Schmutz J."/>
            <person name="Larimer F."/>
            <person name="Land M."/>
            <person name="Hauser L."/>
            <person name="Kyrpides N."/>
            <person name="Kim E."/>
            <person name="Parke J."/>
            <person name="Coenye T."/>
            <person name="Konstantinidis K."/>
            <person name="Ramette A."/>
            <person name="Tiedje J."/>
            <person name="Richardson P."/>
        </authorList>
    </citation>
    <scope>NUCLEOTIDE SEQUENCE [LARGE SCALE GENOMIC DNA]</scope>
    <source>
        <strain>ATCC BAA-244 / DSM 16087 / CCUG 44356 / LMG 19182 / AMMD</strain>
    </source>
</reference>
<feature type="signal peptide" evidence="1">
    <location>
        <begin position="1"/>
        <end position="39"/>
    </location>
</feature>
<feature type="chain" id="PRO_5000127631" description="LPS-assembly protein LptD">
    <location>
        <begin position="40"/>
        <end position="786"/>
    </location>
</feature>
<organism>
    <name type="scientific">Burkholderia ambifaria (strain ATCC BAA-244 / DSM 16087 / CCUG 44356 / LMG 19182 / AMMD)</name>
    <name type="common">Burkholderia cepacia (strain AMMD)</name>
    <dbReference type="NCBI Taxonomy" id="339670"/>
    <lineage>
        <taxon>Bacteria</taxon>
        <taxon>Pseudomonadati</taxon>
        <taxon>Pseudomonadota</taxon>
        <taxon>Betaproteobacteria</taxon>
        <taxon>Burkholderiales</taxon>
        <taxon>Burkholderiaceae</taxon>
        <taxon>Burkholderia</taxon>
        <taxon>Burkholderia cepacia complex</taxon>
    </lineage>
</organism>
<dbReference type="EMBL" id="CP000440">
    <property type="protein sequence ID" value="ABI88319.1"/>
    <property type="molecule type" value="Genomic_DNA"/>
</dbReference>
<dbReference type="RefSeq" id="WP_011657885.1">
    <property type="nucleotide sequence ID" value="NC_008390.1"/>
</dbReference>
<dbReference type="SMR" id="Q0BC04"/>
<dbReference type="GeneID" id="93085037"/>
<dbReference type="KEGG" id="bam:Bamb_2763"/>
<dbReference type="PATRIC" id="fig|339670.21.peg.2130"/>
<dbReference type="eggNOG" id="COG1452">
    <property type="taxonomic scope" value="Bacteria"/>
</dbReference>
<dbReference type="Proteomes" id="UP000000662">
    <property type="component" value="Chromosome 1"/>
</dbReference>
<dbReference type="GO" id="GO:0009279">
    <property type="term" value="C:cell outer membrane"/>
    <property type="evidence" value="ECO:0007669"/>
    <property type="project" value="UniProtKB-SubCell"/>
</dbReference>
<dbReference type="GO" id="GO:1990351">
    <property type="term" value="C:transporter complex"/>
    <property type="evidence" value="ECO:0007669"/>
    <property type="project" value="TreeGrafter"/>
</dbReference>
<dbReference type="GO" id="GO:0043165">
    <property type="term" value="P:Gram-negative-bacterium-type cell outer membrane assembly"/>
    <property type="evidence" value="ECO:0007669"/>
    <property type="project" value="UniProtKB-UniRule"/>
</dbReference>
<dbReference type="GO" id="GO:0015920">
    <property type="term" value="P:lipopolysaccharide transport"/>
    <property type="evidence" value="ECO:0007669"/>
    <property type="project" value="InterPro"/>
</dbReference>
<dbReference type="HAMAP" id="MF_01411">
    <property type="entry name" value="LPS_assembly_LptD"/>
    <property type="match status" value="1"/>
</dbReference>
<dbReference type="InterPro" id="IPR020889">
    <property type="entry name" value="LipoPS_assembly_LptD"/>
</dbReference>
<dbReference type="InterPro" id="IPR050218">
    <property type="entry name" value="LptD"/>
</dbReference>
<dbReference type="InterPro" id="IPR007543">
    <property type="entry name" value="LptD_C"/>
</dbReference>
<dbReference type="PANTHER" id="PTHR30189">
    <property type="entry name" value="LPS-ASSEMBLY PROTEIN"/>
    <property type="match status" value="1"/>
</dbReference>
<dbReference type="PANTHER" id="PTHR30189:SF1">
    <property type="entry name" value="LPS-ASSEMBLY PROTEIN LPTD"/>
    <property type="match status" value="1"/>
</dbReference>
<dbReference type="Pfam" id="PF04453">
    <property type="entry name" value="LptD"/>
    <property type="match status" value="1"/>
</dbReference>
<evidence type="ECO:0000255" key="1">
    <source>
        <dbReference type="HAMAP-Rule" id="MF_01411"/>
    </source>
</evidence>
<name>LPTD_BURCM</name>
<comment type="function">
    <text evidence="1">Together with LptE, is involved in the assembly of lipopolysaccharide (LPS) at the surface of the outer membrane.</text>
</comment>
<comment type="subunit">
    <text evidence="1">Component of the lipopolysaccharide transport and assembly complex. Interacts with LptE and LptA.</text>
</comment>
<comment type="subcellular location">
    <subcellularLocation>
        <location evidence="1">Cell outer membrane</location>
    </subcellularLocation>
</comment>
<comment type="similarity">
    <text evidence="1">Belongs to the LptD family.</text>
</comment>